<organismHost>
    <name type="scientific">Lepidoptera</name>
    <name type="common">butterflies and moths</name>
    <dbReference type="NCBI Taxonomy" id="7088"/>
</organismHost>
<comment type="function">
    <text>Major component of the virus occlusion bodies, which are large proteinaceous structures (polyhedra), that protect the virus from the outside environment for extended periods until they are ingested by insect larvae.</text>
</comment>
<comment type="similarity">
    <text evidence="1">Belongs to the polyhedrin family.</text>
</comment>
<accession>P14670</accession>
<protein>
    <recommendedName>
        <fullName>Polyhedrin</fullName>
    </recommendedName>
    <alternativeName>
        <fullName>Major occlusion protein</fullName>
    </alternativeName>
</protein>
<evidence type="ECO:0000305" key="1"/>
<reference key="1">
    <citation type="journal article" date="1989" name="Virology">
        <title>Insertion of the SfMNPV polyhedrin gene into an AcMNPV polyhedrin deletion mutant during viral infection.</title>
        <authorList>
            <person name="Gonzalez M.A."/>
            <person name="Smith G.E."/>
            <person name="Summers M.D."/>
        </authorList>
    </citation>
    <scope>NUCLEOTIDE SEQUENCE [GENOMIC DNA]</scope>
</reference>
<name>PYHD_NPVSF</name>
<feature type="chain" id="PRO_0000217257" description="Polyhedrin">
    <location>
        <begin position="1"/>
        <end position="246"/>
    </location>
</feature>
<proteinExistence type="inferred from homology"/>
<organism>
    <name type="scientific">Spodoptera frugiperda nuclear polyhedrosis virus</name>
    <name type="common">SfNPV</name>
    <dbReference type="NCBI Taxonomy" id="10455"/>
    <lineage>
        <taxon>Viruses</taxon>
        <taxon>Viruses incertae sedis</taxon>
        <taxon>Naldaviricetes</taxon>
        <taxon>Lefavirales</taxon>
        <taxon>Baculoviridae</taxon>
        <taxon>Alphabaculovirus</taxon>
        <taxon>Alphabaculovirus spofrugiperdae</taxon>
    </lineage>
</organism>
<dbReference type="EMBL" id="M25054">
    <property type="protein sequence ID" value="AAA46736.1"/>
    <property type="molecule type" value="Genomic_DNA"/>
</dbReference>
<dbReference type="EMBL" id="J04333">
    <property type="protein sequence ID" value="AAA46737.1"/>
    <property type="molecule type" value="Genomic_DNA"/>
</dbReference>
<dbReference type="PIR" id="A31472">
    <property type="entry name" value="PYNVSF"/>
</dbReference>
<dbReference type="RefSeq" id="YP_001036294.1">
    <property type="nucleotide sequence ID" value="NC_009011.2"/>
</dbReference>
<dbReference type="SMR" id="P14670"/>
<dbReference type="KEGG" id="vg:5176004"/>
<dbReference type="OrthoDB" id="6325at10239"/>
<dbReference type="GO" id="GO:0039679">
    <property type="term" value="C:viral occlusion body"/>
    <property type="evidence" value="ECO:0007669"/>
    <property type="project" value="UniProtKB-KW"/>
</dbReference>
<dbReference type="GO" id="GO:0005198">
    <property type="term" value="F:structural molecule activity"/>
    <property type="evidence" value="ECO:0007669"/>
    <property type="project" value="InterPro"/>
</dbReference>
<dbReference type="InterPro" id="IPR001746">
    <property type="entry name" value="Polyhedrin"/>
</dbReference>
<dbReference type="Pfam" id="PF00738">
    <property type="entry name" value="Polyhedrin"/>
    <property type="match status" value="1"/>
</dbReference>
<sequence length="246" mass="28945">MYTRYSYNPSLGRTYVYDNKFYKNLGSVIKNAKRKEHLALHEIEERTLDPLERYVVAEDPFLGPGKNQKLTLFKEIRIVKPDTMKLVVNWSGKEFLRETWTRFMEDSFPIVNDQEIMDVFLVINMRPTRPNRCFRFLAQHALRCDPDYVPHEVIRIVEPVYVGNNNEYRISLAKKGGGCPVMNLHSEYTHSFEEFINRVIWENFYKPIVYVGTDSGEEEEILLELSLVFKIKEFAPDAPLYNGPAY</sequence>
<keyword id="KW-0842">Viral occlusion body</keyword>
<gene>
    <name type="primary">PH</name>
    <name type="synonym">P29</name>
    <name type="synonym">POLH</name>
</gene>